<dbReference type="EC" id="2.7.-.-" evidence="1"/>
<dbReference type="EMBL" id="CU928161">
    <property type="protein sequence ID" value="CAR05476.1"/>
    <property type="molecule type" value="Genomic_DNA"/>
</dbReference>
<dbReference type="RefSeq" id="WP_000187545.1">
    <property type="nucleotide sequence ID" value="NC_011742.1"/>
</dbReference>
<dbReference type="SMR" id="B7MHC2"/>
<dbReference type="KEGG" id="ecz:ECS88_4285"/>
<dbReference type="HOGENOM" id="CLU_006533_0_0_6"/>
<dbReference type="UniPathway" id="UPA00232"/>
<dbReference type="Proteomes" id="UP000000747">
    <property type="component" value="Chromosome"/>
</dbReference>
<dbReference type="GO" id="GO:0005886">
    <property type="term" value="C:plasma membrane"/>
    <property type="evidence" value="ECO:0007669"/>
    <property type="project" value="UniProtKB-SubCell"/>
</dbReference>
<dbReference type="GO" id="GO:0005524">
    <property type="term" value="F:ATP binding"/>
    <property type="evidence" value="ECO:0007669"/>
    <property type="project" value="UniProtKB-KW"/>
</dbReference>
<dbReference type="GO" id="GO:0004672">
    <property type="term" value="F:protein kinase activity"/>
    <property type="evidence" value="ECO:0007669"/>
    <property type="project" value="UniProtKB-UniRule"/>
</dbReference>
<dbReference type="GO" id="GO:0010795">
    <property type="term" value="P:regulation of ubiquinone biosynthetic process"/>
    <property type="evidence" value="ECO:0007669"/>
    <property type="project" value="UniProtKB-UniRule"/>
</dbReference>
<dbReference type="GO" id="GO:0006744">
    <property type="term" value="P:ubiquinone biosynthetic process"/>
    <property type="evidence" value="ECO:0007669"/>
    <property type="project" value="UniProtKB-UniPathway"/>
</dbReference>
<dbReference type="CDD" id="cd13972">
    <property type="entry name" value="UbiB"/>
    <property type="match status" value="1"/>
</dbReference>
<dbReference type="HAMAP" id="MF_00414">
    <property type="entry name" value="UbiB"/>
    <property type="match status" value="1"/>
</dbReference>
<dbReference type="InterPro" id="IPR004147">
    <property type="entry name" value="ABC1_dom"/>
</dbReference>
<dbReference type="InterPro" id="IPR011009">
    <property type="entry name" value="Kinase-like_dom_sf"/>
</dbReference>
<dbReference type="InterPro" id="IPR010232">
    <property type="entry name" value="UbiB"/>
</dbReference>
<dbReference type="InterPro" id="IPR045308">
    <property type="entry name" value="UbiB_bact"/>
</dbReference>
<dbReference type="InterPro" id="IPR050154">
    <property type="entry name" value="UbiB_kinase"/>
</dbReference>
<dbReference type="NCBIfam" id="NF003404">
    <property type="entry name" value="PRK04750.1"/>
    <property type="match status" value="1"/>
</dbReference>
<dbReference type="NCBIfam" id="TIGR01982">
    <property type="entry name" value="UbiB"/>
    <property type="match status" value="1"/>
</dbReference>
<dbReference type="PANTHER" id="PTHR10566">
    <property type="entry name" value="CHAPERONE-ACTIVITY OF BC1 COMPLEX CABC1 -RELATED"/>
    <property type="match status" value="1"/>
</dbReference>
<dbReference type="PANTHER" id="PTHR10566:SF113">
    <property type="entry name" value="PROTEIN ACTIVITY OF BC1 COMPLEX KINASE 7, CHLOROPLASTIC"/>
    <property type="match status" value="1"/>
</dbReference>
<dbReference type="Pfam" id="PF03109">
    <property type="entry name" value="ABC1"/>
    <property type="match status" value="1"/>
</dbReference>
<dbReference type="SUPFAM" id="SSF56112">
    <property type="entry name" value="Protein kinase-like (PK-like)"/>
    <property type="match status" value="1"/>
</dbReference>
<feature type="chain" id="PRO_1000123902" description="Probable protein kinase UbiB">
    <location>
        <begin position="1"/>
        <end position="546"/>
    </location>
</feature>
<feature type="transmembrane region" description="Helical" evidence="1">
    <location>
        <begin position="501"/>
        <end position="521"/>
    </location>
</feature>
<feature type="transmembrane region" description="Helical" evidence="1">
    <location>
        <begin position="522"/>
        <end position="542"/>
    </location>
</feature>
<feature type="domain" description="Protein kinase" evidence="1">
    <location>
        <begin position="124"/>
        <end position="502"/>
    </location>
</feature>
<feature type="active site" description="Proton acceptor" evidence="1">
    <location>
        <position position="288"/>
    </location>
</feature>
<feature type="binding site" evidence="1">
    <location>
        <begin position="130"/>
        <end position="138"/>
    </location>
    <ligand>
        <name>ATP</name>
        <dbReference type="ChEBI" id="CHEBI:30616"/>
    </ligand>
</feature>
<feature type="binding site" evidence="1">
    <location>
        <position position="153"/>
    </location>
    <ligand>
        <name>ATP</name>
        <dbReference type="ChEBI" id="CHEBI:30616"/>
    </ligand>
</feature>
<organism>
    <name type="scientific">Escherichia coli O45:K1 (strain S88 / ExPEC)</name>
    <dbReference type="NCBI Taxonomy" id="585035"/>
    <lineage>
        <taxon>Bacteria</taxon>
        <taxon>Pseudomonadati</taxon>
        <taxon>Pseudomonadota</taxon>
        <taxon>Gammaproteobacteria</taxon>
        <taxon>Enterobacterales</taxon>
        <taxon>Enterobacteriaceae</taxon>
        <taxon>Escherichia</taxon>
    </lineage>
</organism>
<name>UBIB_ECO45</name>
<gene>
    <name evidence="1" type="primary">ubiB</name>
    <name type="ordered locus">ECS88_4285</name>
</gene>
<comment type="function">
    <text evidence="1">Is probably a protein kinase regulator of UbiI activity which is involved in aerobic coenzyme Q (ubiquinone) biosynthesis.</text>
</comment>
<comment type="pathway">
    <text>Cofactor biosynthesis; ubiquinone biosynthesis [regulation].</text>
</comment>
<comment type="subcellular location">
    <subcellularLocation>
        <location evidence="1">Cell inner membrane</location>
        <topology evidence="1">Multi-pass membrane protein</topology>
    </subcellularLocation>
</comment>
<comment type="similarity">
    <text evidence="1">Belongs to the ABC1 family. UbiB subfamily.</text>
</comment>
<keyword id="KW-0067">ATP-binding</keyword>
<keyword id="KW-0997">Cell inner membrane</keyword>
<keyword id="KW-1003">Cell membrane</keyword>
<keyword id="KW-0418">Kinase</keyword>
<keyword id="KW-0472">Membrane</keyword>
<keyword id="KW-0547">Nucleotide-binding</keyword>
<keyword id="KW-1185">Reference proteome</keyword>
<keyword id="KW-0808">Transferase</keyword>
<keyword id="KW-0812">Transmembrane</keyword>
<keyword id="KW-1133">Transmembrane helix</keyword>
<keyword id="KW-0831">Ubiquinone biosynthesis</keyword>
<evidence type="ECO:0000255" key="1">
    <source>
        <dbReference type="HAMAP-Rule" id="MF_00414"/>
    </source>
</evidence>
<sequence length="546" mass="63217">MTPGEVRRLYFIIRTFLSYGLDELIPKMRITLPLRLWRYSLFWMPNRHKDKPLGERLRLALQELGPVWIKFGQMLSTRRDLFPPHIADQLALLQDKVAPFDGKLAKQQIEAAMGGLPVEAWFDDFEIKPLASASIAQVHTARLKSNGKEVVIKVIRPDILPVIKADLKLIYRLARWVPRLLPDGRRLRPTEVVREYEKTLIDELNLLRESANAIQLRRNFEDSPMLYIPEVYPDYCSEGMMVMERIYGIPVSDVATLEKNGTNMKLLAERGVQVFFTQVFRDSFFHADMHPGNIFVSYEHPENPKYIGIDCGIVGSLNKEDKRYLAENFIAFFNRDYRKVAELHVDSGWVPPDTNVEEFEFAIRTVCEPIFEKPLAEISFGHVLLNLFNTARRFNMEVQPQLVLLQKTLLYVEGVGRQLYPQLDLWKTAKPFLESWIKDQVGIPALVRAFKEKAPFWVEKMPELPELVYDSLRQGKYLQHSVDKIARELQSNHVRQGQSRYFLGIGATLVLSGTFLLVSRPEWGLMPGWLMAGGLIAWFVGWRKTR</sequence>
<accession>B7MHC2</accession>
<protein>
    <recommendedName>
        <fullName evidence="1">Probable protein kinase UbiB</fullName>
        <ecNumber evidence="1">2.7.-.-</ecNumber>
    </recommendedName>
    <alternativeName>
        <fullName evidence="1">Ubiquinone biosynthesis protein UbiB</fullName>
    </alternativeName>
</protein>
<reference key="1">
    <citation type="journal article" date="2009" name="PLoS Genet.">
        <title>Organised genome dynamics in the Escherichia coli species results in highly diverse adaptive paths.</title>
        <authorList>
            <person name="Touchon M."/>
            <person name="Hoede C."/>
            <person name="Tenaillon O."/>
            <person name="Barbe V."/>
            <person name="Baeriswyl S."/>
            <person name="Bidet P."/>
            <person name="Bingen E."/>
            <person name="Bonacorsi S."/>
            <person name="Bouchier C."/>
            <person name="Bouvet O."/>
            <person name="Calteau A."/>
            <person name="Chiapello H."/>
            <person name="Clermont O."/>
            <person name="Cruveiller S."/>
            <person name="Danchin A."/>
            <person name="Diard M."/>
            <person name="Dossat C."/>
            <person name="Karoui M.E."/>
            <person name="Frapy E."/>
            <person name="Garry L."/>
            <person name="Ghigo J.M."/>
            <person name="Gilles A.M."/>
            <person name="Johnson J."/>
            <person name="Le Bouguenec C."/>
            <person name="Lescat M."/>
            <person name="Mangenot S."/>
            <person name="Martinez-Jehanne V."/>
            <person name="Matic I."/>
            <person name="Nassif X."/>
            <person name="Oztas S."/>
            <person name="Petit M.A."/>
            <person name="Pichon C."/>
            <person name="Rouy Z."/>
            <person name="Ruf C.S."/>
            <person name="Schneider D."/>
            <person name="Tourret J."/>
            <person name="Vacherie B."/>
            <person name="Vallenet D."/>
            <person name="Medigue C."/>
            <person name="Rocha E.P.C."/>
            <person name="Denamur E."/>
        </authorList>
    </citation>
    <scope>NUCLEOTIDE SEQUENCE [LARGE SCALE GENOMIC DNA]</scope>
    <source>
        <strain>S88 / ExPEC</strain>
    </source>
</reference>
<proteinExistence type="inferred from homology"/>